<evidence type="ECO:0000255" key="1">
    <source>
        <dbReference type="HAMAP-Rule" id="MF_01347"/>
    </source>
</evidence>
<accession>B8DRD2</accession>
<name>ATPB_NITV9</name>
<reference key="1">
    <citation type="submission" date="2008-10" db="EMBL/GenBank/DDBJ databases">
        <title>Complete sequence of Desulfovibrio vulgaris str. 'Miyazaki F'.</title>
        <authorList>
            <person name="Lucas S."/>
            <person name="Copeland A."/>
            <person name="Lapidus A."/>
            <person name="Glavina del Rio T."/>
            <person name="Dalin E."/>
            <person name="Tice H."/>
            <person name="Bruce D."/>
            <person name="Goodwin L."/>
            <person name="Pitluck S."/>
            <person name="Sims D."/>
            <person name="Brettin T."/>
            <person name="Detter J.C."/>
            <person name="Han C."/>
            <person name="Larimer F."/>
            <person name="Land M."/>
            <person name="Hauser L."/>
            <person name="Kyrpides N."/>
            <person name="Mikhailova N."/>
            <person name="Hazen T.C."/>
            <person name="Richardson P."/>
        </authorList>
    </citation>
    <scope>NUCLEOTIDE SEQUENCE [LARGE SCALE GENOMIC DNA]</scope>
    <source>
        <strain>DSM 19637 / Miyazaki F</strain>
    </source>
</reference>
<proteinExistence type="inferred from homology"/>
<feature type="chain" id="PRO_1000143496" description="ATP synthase subunit beta">
    <location>
        <begin position="1"/>
        <end position="471"/>
    </location>
</feature>
<feature type="binding site" evidence="1">
    <location>
        <begin position="156"/>
        <end position="163"/>
    </location>
    <ligand>
        <name>ATP</name>
        <dbReference type="ChEBI" id="CHEBI:30616"/>
    </ligand>
</feature>
<protein>
    <recommendedName>
        <fullName evidence="1">ATP synthase subunit beta</fullName>
        <ecNumber evidence="1">7.1.2.2</ecNumber>
    </recommendedName>
    <alternativeName>
        <fullName evidence="1">ATP synthase F1 sector subunit beta</fullName>
    </alternativeName>
    <alternativeName>
        <fullName evidence="1">F-ATPase subunit beta</fullName>
    </alternativeName>
</protein>
<sequence length="471" mass="50952">MSANIGKIVQVIGAVVDVEFPSGNLPNILSALDIKNPNNSDAPQLVCEVAQHLGDNVVRTIAMDATEGLVRGMEAVDTGKPIMVPVGKASLGRIMNVVGRPVDEMGPIKTDKYLPIHRPAPEFTEQNTKVELLETGIKVVDLLIPFPKGGKMGLFGGAGVGKTVILMEMINNIAKQHGGISVFAGVGERTREGNDLYHEMKDAGVLEKAALIYGQMNEPPGARARVALTALACAEYFRDIENQDVLLFVDNIFRFTQAGSEVSALLGRMPSAVGYQPTLGTDLGGLQERITSTVKGSITSVQAVYVPADDLTDPAPATTFSHLDGTLVLSRQIAELGIYPAVDPLDSTSRILDPNVVGPEHYSVARAVQQVLQKYKDLQDIIAILGMDELSDEDKLTVARARRIQRFLSQPFHVAETFTGTPGVYVKLEDTIKAFRGILNGDFDHLAEGDFYMVGGIETALEKYKKRQEQQ</sequence>
<comment type="function">
    <text evidence="1">Produces ATP from ADP in the presence of a proton gradient across the membrane. The catalytic sites are hosted primarily by the beta subunits.</text>
</comment>
<comment type="catalytic activity">
    <reaction evidence="1">
        <text>ATP + H2O + 4 H(+)(in) = ADP + phosphate + 5 H(+)(out)</text>
        <dbReference type="Rhea" id="RHEA:57720"/>
        <dbReference type="ChEBI" id="CHEBI:15377"/>
        <dbReference type="ChEBI" id="CHEBI:15378"/>
        <dbReference type="ChEBI" id="CHEBI:30616"/>
        <dbReference type="ChEBI" id="CHEBI:43474"/>
        <dbReference type="ChEBI" id="CHEBI:456216"/>
        <dbReference type="EC" id="7.1.2.2"/>
    </reaction>
</comment>
<comment type="subunit">
    <text evidence="1">F-type ATPases have 2 components, CF(1) - the catalytic core - and CF(0) - the membrane proton channel. CF(1) has five subunits: alpha(3), beta(3), gamma(1), delta(1), epsilon(1). CF(0) has three main subunits: a(1), b(2) and c(9-12). The alpha and beta chains form an alternating ring which encloses part of the gamma chain. CF(1) is attached to CF(0) by a central stalk formed by the gamma and epsilon chains, while a peripheral stalk is formed by the delta and b chains.</text>
</comment>
<comment type="subcellular location">
    <subcellularLocation>
        <location evidence="1">Cell inner membrane</location>
        <topology evidence="1">Peripheral membrane protein</topology>
    </subcellularLocation>
</comment>
<comment type="similarity">
    <text evidence="1">Belongs to the ATPase alpha/beta chains family.</text>
</comment>
<gene>
    <name evidence="1" type="primary">atpD</name>
    <name type="ordered locus">DvMF_2831</name>
</gene>
<organism>
    <name type="scientific">Nitratidesulfovibrio vulgaris (strain DSM 19637 / Miyazaki F)</name>
    <name type="common">Desulfovibrio vulgaris</name>
    <dbReference type="NCBI Taxonomy" id="883"/>
    <lineage>
        <taxon>Bacteria</taxon>
        <taxon>Pseudomonadati</taxon>
        <taxon>Thermodesulfobacteriota</taxon>
        <taxon>Desulfovibrionia</taxon>
        <taxon>Desulfovibrionales</taxon>
        <taxon>Desulfovibrionaceae</taxon>
        <taxon>Nitratidesulfovibrio</taxon>
    </lineage>
</organism>
<dbReference type="EC" id="7.1.2.2" evidence="1"/>
<dbReference type="EMBL" id="CP001197">
    <property type="protein sequence ID" value="ACL09769.1"/>
    <property type="molecule type" value="Genomic_DNA"/>
</dbReference>
<dbReference type="SMR" id="B8DRD2"/>
<dbReference type="STRING" id="883.DvMF_2831"/>
<dbReference type="KEGG" id="dvm:DvMF_2831"/>
<dbReference type="eggNOG" id="COG0055">
    <property type="taxonomic scope" value="Bacteria"/>
</dbReference>
<dbReference type="HOGENOM" id="CLU_022398_0_2_7"/>
<dbReference type="OrthoDB" id="9801639at2"/>
<dbReference type="GO" id="GO:0005886">
    <property type="term" value="C:plasma membrane"/>
    <property type="evidence" value="ECO:0007669"/>
    <property type="project" value="UniProtKB-SubCell"/>
</dbReference>
<dbReference type="GO" id="GO:0045259">
    <property type="term" value="C:proton-transporting ATP synthase complex"/>
    <property type="evidence" value="ECO:0007669"/>
    <property type="project" value="UniProtKB-KW"/>
</dbReference>
<dbReference type="GO" id="GO:0005524">
    <property type="term" value="F:ATP binding"/>
    <property type="evidence" value="ECO:0007669"/>
    <property type="project" value="UniProtKB-UniRule"/>
</dbReference>
<dbReference type="GO" id="GO:0016887">
    <property type="term" value="F:ATP hydrolysis activity"/>
    <property type="evidence" value="ECO:0007669"/>
    <property type="project" value="InterPro"/>
</dbReference>
<dbReference type="GO" id="GO:0046933">
    <property type="term" value="F:proton-transporting ATP synthase activity, rotational mechanism"/>
    <property type="evidence" value="ECO:0007669"/>
    <property type="project" value="UniProtKB-UniRule"/>
</dbReference>
<dbReference type="CDD" id="cd18110">
    <property type="entry name" value="ATP-synt_F1_beta_C"/>
    <property type="match status" value="1"/>
</dbReference>
<dbReference type="CDD" id="cd18115">
    <property type="entry name" value="ATP-synt_F1_beta_N"/>
    <property type="match status" value="1"/>
</dbReference>
<dbReference type="CDD" id="cd01133">
    <property type="entry name" value="F1-ATPase_beta_CD"/>
    <property type="match status" value="1"/>
</dbReference>
<dbReference type="FunFam" id="1.10.1140.10:FF:000001">
    <property type="entry name" value="ATP synthase subunit beta"/>
    <property type="match status" value="1"/>
</dbReference>
<dbReference type="FunFam" id="2.40.10.170:FF:000005">
    <property type="entry name" value="ATP synthase subunit beta"/>
    <property type="match status" value="1"/>
</dbReference>
<dbReference type="FunFam" id="3.40.50.300:FF:000026">
    <property type="entry name" value="ATP synthase subunit beta"/>
    <property type="match status" value="1"/>
</dbReference>
<dbReference type="Gene3D" id="2.40.10.170">
    <property type="match status" value="1"/>
</dbReference>
<dbReference type="Gene3D" id="1.10.1140.10">
    <property type="entry name" value="Bovine Mitochondrial F1-atpase, Atp Synthase Beta Chain, Chain D, domain 3"/>
    <property type="match status" value="1"/>
</dbReference>
<dbReference type="Gene3D" id="3.40.50.300">
    <property type="entry name" value="P-loop containing nucleotide triphosphate hydrolases"/>
    <property type="match status" value="1"/>
</dbReference>
<dbReference type="HAMAP" id="MF_01347">
    <property type="entry name" value="ATP_synth_beta_bact"/>
    <property type="match status" value="1"/>
</dbReference>
<dbReference type="InterPro" id="IPR003593">
    <property type="entry name" value="AAA+_ATPase"/>
</dbReference>
<dbReference type="InterPro" id="IPR055190">
    <property type="entry name" value="ATP-synt_VA_C"/>
</dbReference>
<dbReference type="InterPro" id="IPR005722">
    <property type="entry name" value="ATP_synth_F1_bsu"/>
</dbReference>
<dbReference type="InterPro" id="IPR020003">
    <property type="entry name" value="ATPase_a/bsu_AS"/>
</dbReference>
<dbReference type="InterPro" id="IPR050053">
    <property type="entry name" value="ATPase_alpha/beta_chains"/>
</dbReference>
<dbReference type="InterPro" id="IPR004100">
    <property type="entry name" value="ATPase_F1/V1/A1_a/bsu_N"/>
</dbReference>
<dbReference type="InterPro" id="IPR036121">
    <property type="entry name" value="ATPase_F1/V1/A1_a/bsu_N_sf"/>
</dbReference>
<dbReference type="InterPro" id="IPR000194">
    <property type="entry name" value="ATPase_F1/V1/A1_a/bsu_nucl-bd"/>
</dbReference>
<dbReference type="InterPro" id="IPR024034">
    <property type="entry name" value="ATPase_F1/V1_b/a_C"/>
</dbReference>
<dbReference type="InterPro" id="IPR027417">
    <property type="entry name" value="P-loop_NTPase"/>
</dbReference>
<dbReference type="NCBIfam" id="TIGR01039">
    <property type="entry name" value="atpD"/>
    <property type="match status" value="1"/>
</dbReference>
<dbReference type="PANTHER" id="PTHR15184">
    <property type="entry name" value="ATP SYNTHASE"/>
    <property type="match status" value="1"/>
</dbReference>
<dbReference type="PANTHER" id="PTHR15184:SF71">
    <property type="entry name" value="ATP SYNTHASE SUBUNIT BETA, MITOCHONDRIAL"/>
    <property type="match status" value="1"/>
</dbReference>
<dbReference type="Pfam" id="PF00006">
    <property type="entry name" value="ATP-synt_ab"/>
    <property type="match status" value="1"/>
</dbReference>
<dbReference type="Pfam" id="PF02874">
    <property type="entry name" value="ATP-synt_ab_N"/>
    <property type="match status" value="1"/>
</dbReference>
<dbReference type="Pfam" id="PF22919">
    <property type="entry name" value="ATP-synt_VA_C"/>
    <property type="match status" value="1"/>
</dbReference>
<dbReference type="PIRSF" id="PIRSF039072">
    <property type="entry name" value="ATPase_subunit_beta"/>
    <property type="match status" value="1"/>
</dbReference>
<dbReference type="SMART" id="SM00382">
    <property type="entry name" value="AAA"/>
    <property type="match status" value="1"/>
</dbReference>
<dbReference type="SUPFAM" id="SSF47917">
    <property type="entry name" value="C-terminal domain of alpha and beta subunits of F1 ATP synthase"/>
    <property type="match status" value="1"/>
</dbReference>
<dbReference type="SUPFAM" id="SSF50615">
    <property type="entry name" value="N-terminal domain of alpha and beta subunits of F1 ATP synthase"/>
    <property type="match status" value="1"/>
</dbReference>
<dbReference type="SUPFAM" id="SSF52540">
    <property type="entry name" value="P-loop containing nucleoside triphosphate hydrolases"/>
    <property type="match status" value="1"/>
</dbReference>
<dbReference type="PROSITE" id="PS00152">
    <property type="entry name" value="ATPASE_ALPHA_BETA"/>
    <property type="match status" value="1"/>
</dbReference>
<keyword id="KW-0066">ATP synthesis</keyword>
<keyword id="KW-0067">ATP-binding</keyword>
<keyword id="KW-0997">Cell inner membrane</keyword>
<keyword id="KW-1003">Cell membrane</keyword>
<keyword id="KW-0139">CF(1)</keyword>
<keyword id="KW-0375">Hydrogen ion transport</keyword>
<keyword id="KW-0406">Ion transport</keyword>
<keyword id="KW-0472">Membrane</keyword>
<keyword id="KW-0547">Nucleotide-binding</keyword>
<keyword id="KW-1278">Translocase</keyword>
<keyword id="KW-0813">Transport</keyword>